<name>GH_HHV1E</name>
<organismHost>
    <name type="scientific">Homo sapiens</name>
    <name type="common">Human</name>
    <dbReference type="NCBI Taxonomy" id="9606"/>
</organismHost>
<organism>
    <name type="scientific">Human herpesvirus 1 (strain HFEM)</name>
    <name type="common">HHV-1</name>
    <name type="synonym">Human herpes simplex virus 1</name>
    <dbReference type="NCBI Taxonomy" id="10303"/>
    <lineage>
        <taxon>Viruses</taxon>
        <taxon>Duplodnaviria</taxon>
        <taxon>Heunggongvirae</taxon>
        <taxon>Peploviricota</taxon>
        <taxon>Herviviricetes</taxon>
        <taxon>Herpesvirales</taxon>
        <taxon>Orthoherpesviridae</taxon>
        <taxon>Alphaherpesvirinae</taxon>
        <taxon>Simplexvirus</taxon>
        <taxon>Simplexvirus humanalpha1</taxon>
        <taxon>Human herpesvirus 1</taxon>
    </lineage>
</organism>
<accession>P08356</accession>
<proteinExistence type="inferred from homology"/>
<feature type="signal peptide" evidence="1">
    <location>
        <begin position="1"/>
        <end position="18"/>
    </location>
</feature>
<feature type="chain" id="PRO_0000038236" description="Envelope glycoprotein H" evidence="1">
    <location>
        <begin position="19"/>
        <end position="838"/>
    </location>
</feature>
<feature type="topological domain" description="Virion surface" evidence="1">
    <location>
        <begin position="19"/>
        <end position="803"/>
    </location>
</feature>
<feature type="transmembrane region" description="Helical" evidence="1">
    <location>
        <begin position="804"/>
        <end position="824"/>
    </location>
</feature>
<feature type="topological domain" description="Intravirion" evidence="1">
    <location>
        <begin position="825"/>
        <end position="838"/>
    </location>
</feature>
<feature type="region of interest" description="Disordered" evidence="2">
    <location>
        <begin position="174"/>
        <end position="204"/>
    </location>
</feature>
<feature type="region of interest" description="Interaction with gL" evidence="1">
    <location>
        <begin position="259"/>
        <end position="323"/>
    </location>
</feature>
<feature type="glycosylation site" description="N-linked (GlcNAc...) asparagine; by host" evidence="1">
    <location>
        <position position="73"/>
    </location>
</feature>
<feature type="glycosylation site" description="N-linked (GlcNAc...) asparagine; by host" evidence="1">
    <location>
        <position position="120"/>
    </location>
</feature>
<feature type="glycosylation site" description="N-linked (GlcNAc...) asparagine; by host" evidence="1">
    <location>
        <position position="216"/>
    </location>
</feature>
<feature type="glycosylation site" description="N-linked (GlcNAc...) asparagine; by host" evidence="1">
    <location>
        <position position="332"/>
    </location>
</feature>
<feature type="glycosylation site" description="N-linked (GlcNAc...) asparagine; by host" evidence="1">
    <location>
        <position position="437"/>
    </location>
</feature>
<feature type="glycosylation site" description="N-linked (GlcNAc...) asparagine; by host" evidence="1">
    <location>
        <position position="670"/>
    </location>
</feature>
<feature type="glycosylation site" description="N-linked (GlcNAc...) asparagine; by host" evidence="1">
    <location>
        <position position="784"/>
    </location>
</feature>
<sequence length="838" mass="90324">MGNGLWFVGVIILGAAWGQVHDWTEQTDPWFLDGLGMDRMYWRDTNTGRLWLPNTPDPQKPPRGFLAPPDELNLTTASLPLLRWYEERFCFVLVTTAEFPRDPGQLLYIPKTYLLGRPPNASLPAPTTVEPTAQPPPAVAPLKGLLHNPTASVLLRSRAWVTFSAVPDPEALTFPRGDNVATASHPSGPRDTPPPRPPVGARRHPTTELDITHLHNASTTWLATRGLLRSPGRYVYFSPSASTWPVGIWTTGELVLGCDAALVRARYGREFMGLVISMHDSPPAEVMVVPAGQTLDRVGDPADENPPGALPGPPGGPRYRVFVLGSLTRADNGSALDALRRVGGYPEEGTNYAQFLSRAYAEFFSGDAGAEQGPRPPLFWRLTGLLATSGFAFVNAAHANGAVCLSDLLGFLAHSRALAGLAARGAAGCAADSVFFNVSVLDPTARLQLEARLQHLVAEILEREQSLALHALGYQLAFVLDSPSAYDAVAPSAAHLIDALYAEFLGGRVLTTPVVHRALFYASAVLRQPFLAGVPSAVQRERARRSLLIASALCTSDVAAATNADLRTALARADHQKTLFWLPDHFSPCAASLRFDLDESVFILDALAQATRSETPVEVLAQQTHGLASTLTRWAHYNALIRAFVPEASHRCGGQSANVEPRILVPITHNASYVVTHSPLPRGIGYKLTGVDVRRPLFLTYLTATCEGSTRDIESKRLVRTQNQRDLGLVGAVFMRYTPAGEVMSVLLVDTDNTQQQIAAGPTEGAPSVFSSDVPSTALLLFPNGTVIHLLAFDTQPVAAIAPGFLAASALGVVMITAALAGILKVLRTSVPFFWRRE</sequence>
<comment type="function">
    <text evidence="1">The heterodimer glycoprotein H-glycoprotein L is required for the fusion of viral and plasma membranes leading to virus entry into the host cell. Following initial binding to host receptor, membrane fusion is mediated by the fusion machinery composed of gB and the heterodimer gH/gL. May also be involved in the fusion between the virion envelope and the outer nuclear membrane during virion morphogenesis.</text>
</comment>
<comment type="subunit">
    <text evidence="1">Interacts with glycoprotein L (gL); this interaction is necessary for the correct processing and cell surface expression of gH. The heterodimer gH/gL seems to interact with gB trimers during fusion.</text>
</comment>
<comment type="subcellular location">
    <subcellularLocation>
        <location evidence="1">Virion membrane</location>
        <topology evidence="1">Single-pass type I membrane protein</topology>
    </subcellularLocation>
    <subcellularLocation>
        <location evidence="1">Host cell membrane</location>
        <topology evidence="1">Single-pass type I membrane protein</topology>
    </subcellularLocation>
    <subcellularLocation>
        <location evidence="1">Host endosome membrane</location>
        <topology evidence="1">Single-pass type I membrane protein</topology>
    </subcellularLocation>
    <text evidence="1">During virion morphogenesis, this protein probably accumulates in the endosomes and trans-Golgi where secondary envelopment occurs. It is probably transported to the cell surface from where it is endocytosed and directed to the trans-Golgi network (TGN).</text>
</comment>
<comment type="PTM">
    <text evidence="1">N-glycosylated, O-glycosylated, and sialylated.</text>
</comment>
<comment type="similarity">
    <text evidence="1">Belongs to the herpesviridae glycoprotein H family.</text>
</comment>
<evidence type="ECO:0000255" key="1">
    <source>
        <dbReference type="HAMAP-Rule" id="MF_04033"/>
    </source>
</evidence>
<evidence type="ECO:0000256" key="2">
    <source>
        <dbReference type="SAM" id="MobiDB-lite"/>
    </source>
</evidence>
<gene>
    <name evidence="1" type="primary">gH</name>
    <name type="ORF">UL22</name>
</gene>
<protein>
    <recommendedName>
        <fullName evidence="1">Envelope glycoprotein H</fullName>
        <shortName evidence="1">gH</shortName>
    </recommendedName>
</protein>
<dbReference type="EMBL" id="M14884">
    <property type="protein sequence ID" value="AAA45815.1"/>
    <property type="molecule type" value="Genomic_DNA"/>
</dbReference>
<dbReference type="BMRB" id="P08356"/>
<dbReference type="SMR" id="P08356"/>
<dbReference type="GlyCosmos" id="P08356">
    <property type="glycosylation" value="7 sites, No reported glycans"/>
</dbReference>
<dbReference type="GO" id="GO:0044175">
    <property type="term" value="C:host cell endosome membrane"/>
    <property type="evidence" value="ECO:0007669"/>
    <property type="project" value="UniProtKB-SubCell"/>
</dbReference>
<dbReference type="GO" id="GO:0020002">
    <property type="term" value="C:host cell plasma membrane"/>
    <property type="evidence" value="ECO:0007669"/>
    <property type="project" value="UniProtKB-SubCell"/>
</dbReference>
<dbReference type="GO" id="GO:0016020">
    <property type="term" value="C:membrane"/>
    <property type="evidence" value="ECO:0007669"/>
    <property type="project" value="UniProtKB-KW"/>
</dbReference>
<dbReference type="GO" id="GO:0019031">
    <property type="term" value="C:viral envelope"/>
    <property type="evidence" value="ECO:0007669"/>
    <property type="project" value="UniProtKB-KW"/>
</dbReference>
<dbReference type="GO" id="GO:0055036">
    <property type="term" value="C:virion membrane"/>
    <property type="evidence" value="ECO:0007669"/>
    <property type="project" value="UniProtKB-SubCell"/>
</dbReference>
<dbReference type="GO" id="GO:0019064">
    <property type="term" value="P:fusion of virus membrane with host plasma membrane"/>
    <property type="evidence" value="ECO:0007669"/>
    <property type="project" value="UniProtKB-KW"/>
</dbReference>
<dbReference type="GO" id="GO:0046718">
    <property type="term" value="P:symbiont entry into host cell"/>
    <property type="evidence" value="ECO:0007669"/>
    <property type="project" value="UniProtKB-KW"/>
</dbReference>
<dbReference type="Gene3D" id="1.20.58.1340">
    <property type="match status" value="1"/>
</dbReference>
<dbReference type="Gene3D" id="3.10.360.40">
    <property type="match status" value="1"/>
</dbReference>
<dbReference type="Gene3D" id="3.30.500.50">
    <property type="match status" value="1"/>
</dbReference>
<dbReference type="Gene3D" id="2.60.40.3190">
    <property type="entry name" value="Herpesvirus glycoprotein H, C-terminal domain"/>
    <property type="match status" value="1"/>
</dbReference>
<dbReference type="HAMAP" id="MF_04033">
    <property type="entry name" value="HSV_GH"/>
    <property type="match status" value="1"/>
</dbReference>
<dbReference type="InterPro" id="IPR003493">
    <property type="entry name" value="Herpes_gH"/>
</dbReference>
<dbReference type="InterPro" id="IPR035305">
    <property type="entry name" value="Herpes_glycoH_C"/>
</dbReference>
<dbReference type="InterPro" id="IPR038172">
    <property type="entry name" value="Herpes_glycoH_C_sf"/>
</dbReference>
<dbReference type="Pfam" id="PF17488">
    <property type="entry name" value="Herpes_glycoH_C"/>
    <property type="match status" value="1"/>
</dbReference>
<dbReference type="Pfam" id="PF02489">
    <property type="entry name" value="Herpes_glycop_H"/>
    <property type="match status" value="1"/>
</dbReference>
<reference key="1">
    <citation type="journal article" date="1986" name="Virology">
        <title>The properties and sequence of glycoprotein H of herpes simplex virus type 1.</title>
        <authorList>
            <person name="Gompels U."/>
            <person name="Minson A."/>
        </authorList>
    </citation>
    <scope>NUCLEOTIDE SEQUENCE [GENOMIC DNA]</scope>
</reference>
<keyword id="KW-1169">Fusion of virus membrane with host cell membrane</keyword>
<keyword id="KW-1168">Fusion of virus membrane with host membrane</keyword>
<keyword id="KW-0325">Glycoprotein</keyword>
<keyword id="KW-1032">Host cell membrane</keyword>
<keyword id="KW-1039">Host endosome</keyword>
<keyword id="KW-1043">Host membrane</keyword>
<keyword id="KW-0472">Membrane</keyword>
<keyword id="KW-0730">Sialic acid</keyword>
<keyword id="KW-0732">Signal</keyword>
<keyword id="KW-0812">Transmembrane</keyword>
<keyword id="KW-1133">Transmembrane helix</keyword>
<keyword id="KW-0261">Viral envelope protein</keyword>
<keyword id="KW-1162">Viral penetration into host cytoplasm</keyword>
<keyword id="KW-0946">Virion</keyword>
<keyword id="KW-1160">Virus entry into host cell</keyword>